<comment type="function">
    <text evidence="1">Is likely the initiating enzyme for the K2 capsular polysaccharide synthesis. Catalyzes the transfer of the glucose-1-phosphate moiety from UDP-Glc onto the carrier lipid undecaprenyl phosphate (C55-P), forming a phosphoanhydride bond yielding to glucosyl-pyrophosphoryl-undecaprenol (Glc-PP-C55) (By similarity).</text>
</comment>
<comment type="catalytic activity">
    <reaction>
        <text>di-trans,octa-cis-undecaprenyl phosphate + UDP-alpha-D-glucose = alpha-D-glucosyl di-trans,octa-cis-undecaprenyl diphosphate + UMP</text>
        <dbReference type="Rhea" id="RHEA:28126"/>
        <dbReference type="ChEBI" id="CHEBI:57865"/>
        <dbReference type="ChEBI" id="CHEBI:58885"/>
        <dbReference type="ChEBI" id="CHEBI:60392"/>
        <dbReference type="ChEBI" id="CHEBI:61254"/>
        <dbReference type="EC" id="2.7.8.31"/>
    </reaction>
</comment>
<comment type="pathway">
    <text>Capsule biogenesis; capsule polysaccharide biosynthesis.</text>
</comment>
<comment type="subcellular location">
    <subcellularLocation>
        <location evidence="1">Cell inner membrane</location>
        <topology evidence="1">Multi-pass membrane protein</topology>
    </subcellularLocation>
</comment>
<comment type="similarity">
    <text evidence="3">Belongs to the bacterial sugar transferase family.</text>
</comment>
<proteinExistence type="inferred from homology"/>
<dbReference type="EC" id="2.7.8.31"/>
<dbReference type="EMBL" id="D21242">
    <property type="protein sequence ID" value="BAA04785.1"/>
    <property type="molecule type" value="Genomic_DNA"/>
</dbReference>
<dbReference type="PIR" id="C56146">
    <property type="entry name" value="C56146"/>
</dbReference>
<dbReference type="SMR" id="Q48460"/>
<dbReference type="UniPathway" id="UPA00934"/>
<dbReference type="GO" id="GO:0005886">
    <property type="term" value="C:plasma membrane"/>
    <property type="evidence" value="ECO:0007669"/>
    <property type="project" value="UniProtKB-SubCell"/>
</dbReference>
<dbReference type="GO" id="GO:0016757">
    <property type="term" value="F:glycosyltransferase activity"/>
    <property type="evidence" value="ECO:0007669"/>
    <property type="project" value="UniProtKB-KW"/>
</dbReference>
<dbReference type="GO" id="GO:0089702">
    <property type="term" value="F:undecaprenyl-phosphate glucose phosphotransferase activity"/>
    <property type="evidence" value="ECO:0007669"/>
    <property type="project" value="UniProtKB-EC"/>
</dbReference>
<dbReference type="GO" id="GO:0045227">
    <property type="term" value="P:capsule polysaccharide biosynthetic process"/>
    <property type="evidence" value="ECO:0007669"/>
    <property type="project" value="UniProtKB-UniPathway"/>
</dbReference>
<dbReference type="GO" id="GO:0009242">
    <property type="term" value="P:colanic acid biosynthetic process"/>
    <property type="evidence" value="ECO:0007669"/>
    <property type="project" value="TreeGrafter"/>
</dbReference>
<dbReference type="GO" id="GO:0009103">
    <property type="term" value="P:lipopolysaccharide biosynthetic process"/>
    <property type="evidence" value="ECO:0007669"/>
    <property type="project" value="UniProtKB-KW"/>
</dbReference>
<dbReference type="Gene3D" id="3.40.50.720">
    <property type="entry name" value="NAD(P)-binding Rossmann-like Domain"/>
    <property type="match status" value="1"/>
</dbReference>
<dbReference type="InterPro" id="IPR003362">
    <property type="entry name" value="Bact_transf"/>
</dbReference>
<dbReference type="InterPro" id="IPR017475">
    <property type="entry name" value="EPS_sugar_tfrase"/>
</dbReference>
<dbReference type="InterPro" id="IPR017473">
    <property type="entry name" value="Undecaprenyl-P_gluc_Ptfrase"/>
</dbReference>
<dbReference type="NCBIfam" id="TIGR03025">
    <property type="entry name" value="EPS_sugtrans"/>
    <property type="match status" value="1"/>
</dbReference>
<dbReference type="NCBIfam" id="NF007518">
    <property type="entry name" value="PRK10124.1"/>
    <property type="match status" value="1"/>
</dbReference>
<dbReference type="NCBIfam" id="TIGR03023">
    <property type="entry name" value="WcaJ_sugtrans"/>
    <property type="match status" value="1"/>
</dbReference>
<dbReference type="PANTHER" id="PTHR30576">
    <property type="entry name" value="COLANIC BIOSYNTHESIS UDP-GLUCOSE LIPID CARRIER TRANSFERASE"/>
    <property type="match status" value="1"/>
</dbReference>
<dbReference type="PANTHER" id="PTHR30576:SF21">
    <property type="entry name" value="UDP-GLUCOSE:UNDECAPRENYL-PHOSPHATE GLUCOSE-1-PHOSPHATE TRANSFERASE"/>
    <property type="match status" value="1"/>
</dbReference>
<dbReference type="Pfam" id="PF02397">
    <property type="entry name" value="Bac_transf"/>
    <property type="match status" value="1"/>
</dbReference>
<dbReference type="Pfam" id="PF13727">
    <property type="entry name" value="CoA_binding_3"/>
    <property type="match status" value="1"/>
</dbReference>
<name>GPPUS_KLEPN</name>
<sequence length="465" mass="53402">MTISQHRFRSNANASIISMLQRFSDILIIFLGIYFSCFINDYFFNLHYVLMALVALVVFQMIGGITDFYRSWRGVEFSVELILILKNWSLSFLLTLGFVTLFSDFDLTFRTFIFWYLAVCAGFVVTRPLIRALAGFFRRIGYNKRRVAFAGSLPAGISLLETFRKQPWLGFEVKGIYEDSFSGTYDLELYAGKISDLINEARKGTIDRIYIAMHMRDEVAIKNMVSQLTDTTCSVLYIPDVFTFNILQSRTEEINGVPVVPLFDSPLNGINMVFKRLEDIIVSSLILILISPILLVIATAVKTTSKGPVIFRQVRYGMDGKPIKVWKFRSMTVMENDDKVIQATKNDIRVTKVGKFLRSTSLDELPQFFNVLFGQMSVVGPRPHAVSHNEQYRSLIQGYMLRHKVKPGITGLAQINGWRGETDTLEKMEKRIEYDLLYIRGWSIWLDLKIIFLTVFKGFINKSAY</sequence>
<protein>
    <recommendedName>
        <fullName>UDP-glucose:undecaprenyl-phosphate glucose-1-phosphate transferase</fullName>
        <shortName>UDP-Glc:Und-P Glc-1-P transferase</shortName>
        <ecNumber>2.7.8.31</ecNumber>
    </recommendedName>
    <alternativeName>
        <fullName>Capsular polysaccharide biosynthesis lipid carrier glucose-1-P transferase</fullName>
    </alternativeName>
    <alternativeName>
        <fullName>Glucosyl-P-P-undecaprenol synthase</fullName>
    </alternativeName>
    <alternativeName>
        <fullName>ORF14</fullName>
    </alternativeName>
</protein>
<evidence type="ECO:0000250" key="1"/>
<evidence type="ECO:0000255" key="2"/>
<evidence type="ECO:0000305" key="3"/>
<feature type="chain" id="PRO_0000166472" description="UDP-glucose:undecaprenyl-phosphate glucose-1-phosphate transferase">
    <location>
        <begin position="1"/>
        <end position="465"/>
    </location>
</feature>
<feature type="transmembrane region" description="Helical" evidence="2">
    <location>
        <begin position="23"/>
        <end position="43"/>
    </location>
</feature>
<feature type="transmembrane region" description="Helical" evidence="2">
    <location>
        <begin position="46"/>
        <end position="66"/>
    </location>
</feature>
<feature type="transmembrane region" description="Helical" evidence="2">
    <location>
        <begin position="82"/>
        <end position="102"/>
    </location>
</feature>
<feature type="transmembrane region" description="Helical" evidence="2">
    <location>
        <begin position="105"/>
        <end position="125"/>
    </location>
</feature>
<feature type="transmembrane region" description="Helical" evidence="2">
    <location>
        <begin position="280"/>
        <end position="300"/>
    </location>
</feature>
<reference key="1">
    <citation type="journal article" date="1995" name="J. Bacteriol.">
        <title>Genomic organization of the Klebsiella pneumoniae cps region responsible for serotype K2 capsular polysaccharide synthesis in the virulent strain Chedid.</title>
        <authorList>
            <person name="Arakawa Y."/>
            <person name="Wacharotayankun R."/>
            <person name="Nagatsuka T."/>
            <person name="Ito H."/>
            <person name="Kato N."/>
            <person name="Ohta M."/>
        </authorList>
    </citation>
    <scope>NUCLEOTIDE SEQUENCE [GENOMIC DNA]</scope>
    <source>
        <strain>Chedid</strain>
    </source>
</reference>
<accession>Q48460</accession>
<keyword id="KW-0972">Capsule biogenesis/degradation</keyword>
<keyword id="KW-0997">Cell inner membrane</keyword>
<keyword id="KW-1003">Cell membrane</keyword>
<keyword id="KW-0270">Exopolysaccharide synthesis</keyword>
<keyword id="KW-0328">Glycosyltransferase</keyword>
<keyword id="KW-0448">Lipopolysaccharide biosynthesis</keyword>
<keyword id="KW-0472">Membrane</keyword>
<keyword id="KW-0808">Transferase</keyword>
<keyword id="KW-0812">Transmembrane</keyword>
<keyword id="KW-1133">Transmembrane helix</keyword>
<organism>
    <name type="scientific">Klebsiella pneumoniae</name>
    <dbReference type="NCBI Taxonomy" id="573"/>
    <lineage>
        <taxon>Bacteria</taxon>
        <taxon>Pseudomonadati</taxon>
        <taxon>Pseudomonadota</taxon>
        <taxon>Gammaproteobacteria</taxon>
        <taxon>Enterobacterales</taxon>
        <taxon>Enterobacteriaceae</taxon>
        <taxon>Klebsiella/Raoultella group</taxon>
        <taxon>Klebsiella</taxon>
        <taxon>Klebsiella pneumoniae complex</taxon>
    </lineage>
</organism>